<accession>Q17Y93</accession>
<organism>
    <name type="scientific">Helicobacter acinonychis (strain Sheeba)</name>
    <dbReference type="NCBI Taxonomy" id="382638"/>
    <lineage>
        <taxon>Bacteria</taxon>
        <taxon>Pseudomonadati</taxon>
        <taxon>Campylobacterota</taxon>
        <taxon>Epsilonproteobacteria</taxon>
        <taxon>Campylobacterales</taxon>
        <taxon>Helicobacteraceae</taxon>
        <taxon>Helicobacter</taxon>
    </lineage>
</organism>
<gene>
    <name evidence="1" type="primary">obg</name>
    <name type="ordered locus">Hac_0564</name>
</gene>
<evidence type="ECO:0000255" key="1">
    <source>
        <dbReference type="HAMAP-Rule" id="MF_01454"/>
    </source>
</evidence>
<evidence type="ECO:0000255" key="2">
    <source>
        <dbReference type="PROSITE-ProRule" id="PRU01231"/>
    </source>
</evidence>
<reference key="1">
    <citation type="journal article" date="2006" name="PLoS Genet.">
        <title>Who ate whom? Adaptive Helicobacter genomic changes that accompanied a host jump from early humans to large felines.</title>
        <authorList>
            <person name="Eppinger M."/>
            <person name="Baar C."/>
            <person name="Linz B."/>
            <person name="Raddatz G."/>
            <person name="Lanz C."/>
            <person name="Keller H."/>
            <person name="Morelli G."/>
            <person name="Gressmann H."/>
            <person name="Achtman M."/>
            <person name="Schuster S.C."/>
        </authorList>
    </citation>
    <scope>NUCLEOTIDE SEQUENCE [LARGE SCALE GENOMIC DNA]</scope>
    <source>
        <strain>Sheeba</strain>
    </source>
</reference>
<feature type="chain" id="PRO_0000385971" description="GTPase Obg">
    <location>
        <begin position="1"/>
        <end position="360"/>
    </location>
</feature>
<feature type="domain" description="Obg" evidence="2">
    <location>
        <begin position="1"/>
        <end position="156"/>
    </location>
</feature>
<feature type="domain" description="OBG-type G" evidence="1">
    <location>
        <begin position="157"/>
        <end position="360"/>
    </location>
</feature>
<feature type="binding site" evidence="1">
    <location>
        <begin position="163"/>
        <end position="170"/>
    </location>
    <ligand>
        <name>GTP</name>
        <dbReference type="ChEBI" id="CHEBI:37565"/>
    </ligand>
</feature>
<feature type="binding site" evidence="1">
    <location>
        <position position="170"/>
    </location>
    <ligand>
        <name>Mg(2+)</name>
        <dbReference type="ChEBI" id="CHEBI:18420"/>
    </ligand>
</feature>
<feature type="binding site" evidence="1">
    <location>
        <begin position="188"/>
        <end position="192"/>
    </location>
    <ligand>
        <name>GTP</name>
        <dbReference type="ChEBI" id="CHEBI:37565"/>
    </ligand>
</feature>
<feature type="binding site" evidence="1">
    <location>
        <position position="190"/>
    </location>
    <ligand>
        <name>Mg(2+)</name>
        <dbReference type="ChEBI" id="CHEBI:18420"/>
    </ligand>
</feature>
<feature type="binding site" evidence="1">
    <location>
        <begin position="210"/>
        <end position="213"/>
    </location>
    <ligand>
        <name>GTP</name>
        <dbReference type="ChEBI" id="CHEBI:37565"/>
    </ligand>
</feature>
<feature type="binding site" evidence="1">
    <location>
        <begin position="279"/>
        <end position="282"/>
    </location>
    <ligand>
        <name>GTP</name>
        <dbReference type="ChEBI" id="CHEBI:37565"/>
    </ligand>
</feature>
<feature type="binding site" evidence="1">
    <location>
        <begin position="341"/>
        <end position="343"/>
    </location>
    <ligand>
        <name>GTP</name>
        <dbReference type="ChEBI" id="CHEBI:37565"/>
    </ligand>
</feature>
<protein>
    <recommendedName>
        <fullName evidence="1">GTPase Obg</fullName>
        <ecNumber evidence="1">3.6.5.-</ecNumber>
    </recommendedName>
    <alternativeName>
        <fullName evidence="1">GTP-binding protein Obg</fullName>
    </alternativeName>
</protein>
<name>OBG_HELAH</name>
<comment type="function">
    <text evidence="1">An essential GTPase which binds GTP, GDP and possibly (p)ppGpp with moderate affinity, with high nucleotide exchange rates and a fairly low GTP hydrolysis rate. Plays a role in control of the cell cycle, stress response, ribosome biogenesis and in those bacteria that undergo differentiation, in morphogenesis control.</text>
</comment>
<comment type="cofactor">
    <cofactor evidence="1">
        <name>Mg(2+)</name>
        <dbReference type="ChEBI" id="CHEBI:18420"/>
    </cofactor>
</comment>
<comment type="subunit">
    <text evidence="1">Monomer.</text>
</comment>
<comment type="subcellular location">
    <subcellularLocation>
        <location evidence="1">Cytoplasm</location>
    </subcellularLocation>
</comment>
<comment type="similarity">
    <text evidence="1">Belongs to the TRAFAC class OBG-HflX-like GTPase superfamily. OBG GTPase family.</text>
</comment>
<sequence length="360" mass="38784">MFVDSVEIIIASGKGGPGMVSFRREKFVIKGGPDGGDGGDGGDVYFEVDNNTDTLASFRGTKHHKAKNGAPGGTRNCTGKKGEDKIIIVPPGTQVFADGALWLDLITPKERVLALKGGKGGLGNAHFKSATKQQPTYAQKGLEGVEKCVRLELKLIADIGLVGFPNAGKSTLISTISNAKPKIAHYEFTTLVPNLGVVSVDEKSGFLMADIPGIIEGASEGKGLGISFLKHIERTKVLAFVLDASRLDLGIKEQYKRLRLELEKFSPALANKPFGVLLNKCDVAEDIDTMTKDFCTFLNLKVQKLEAFDLEPYLGFLHPKLMGNFEKDLNEKSALFILPLSAVSALNTHALKFVLLEALP</sequence>
<dbReference type="EC" id="3.6.5.-" evidence="1"/>
<dbReference type="EMBL" id="AM260522">
    <property type="protein sequence ID" value="CAJ99383.1"/>
    <property type="molecule type" value="Genomic_DNA"/>
</dbReference>
<dbReference type="RefSeq" id="WP_011577497.1">
    <property type="nucleotide sequence ID" value="NC_008229.1"/>
</dbReference>
<dbReference type="SMR" id="Q17Y93"/>
<dbReference type="STRING" id="382638.Hac_0564"/>
<dbReference type="GeneID" id="31758044"/>
<dbReference type="KEGG" id="hac:Hac_0564"/>
<dbReference type="eggNOG" id="COG0536">
    <property type="taxonomic scope" value="Bacteria"/>
</dbReference>
<dbReference type="HOGENOM" id="CLU_011747_2_0_7"/>
<dbReference type="OrthoDB" id="9807318at2"/>
<dbReference type="BioCyc" id="HACI382638:HAC_RS02500-MONOMER"/>
<dbReference type="Proteomes" id="UP000000775">
    <property type="component" value="Chromosome"/>
</dbReference>
<dbReference type="GO" id="GO:0005737">
    <property type="term" value="C:cytoplasm"/>
    <property type="evidence" value="ECO:0007669"/>
    <property type="project" value="UniProtKB-SubCell"/>
</dbReference>
<dbReference type="GO" id="GO:0005525">
    <property type="term" value="F:GTP binding"/>
    <property type="evidence" value="ECO:0007669"/>
    <property type="project" value="UniProtKB-UniRule"/>
</dbReference>
<dbReference type="GO" id="GO:0003924">
    <property type="term" value="F:GTPase activity"/>
    <property type="evidence" value="ECO:0007669"/>
    <property type="project" value="UniProtKB-UniRule"/>
</dbReference>
<dbReference type="GO" id="GO:0000287">
    <property type="term" value="F:magnesium ion binding"/>
    <property type="evidence" value="ECO:0007669"/>
    <property type="project" value="InterPro"/>
</dbReference>
<dbReference type="GO" id="GO:0042254">
    <property type="term" value="P:ribosome biogenesis"/>
    <property type="evidence" value="ECO:0007669"/>
    <property type="project" value="UniProtKB-UniRule"/>
</dbReference>
<dbReference type="CDD" id="cd01898">
    <property type="entry name" value="Obg"/>
    <property type="match status" value="1"/>
</dbReference>
<dbReference type="FunFam" id="2.70.210.12:FF:000001">
    <property type="entry name" value="GTPase Obg"/>
    <property type="match status" value="1"/>
</dbReference>
<dbReference type="Gene3D" id="2.70.210.12">
    <property type="entry name" value="GTP1/OBG domain"/>
    <property type="match status" value="1"/>
</dbReference>
<dbReference type="Gene3D" id="3.40.50.300">
    <property type="entry name" value="P-loop containing nucleotide triphosphate hydrolases"/>
    <property type="match status" value="1"/>
</dbReference>
<dbReference type="HAMAP" id="MF_01454">
    <property type="entry name" value="GTPase_Obg"/>
    <property type="match status" value="1"/>
</dbReference>
<dbReference type="InterPro" id="IPR031167">
    <property type="entry name" value="G_OBG"/>
</dbReference>
<dbReference type="InterPro" id="IPR006073">
    <property type="entry name" value="GTP-bd"/>
</dbReference>
<dbReference type="InterPro" id="IPR014100">
    <property type="entry name" value="GTP-bd_Obg/CgtA"/>
</dbReference>
<dbReference type="InterPro" id="IPR006074">
    <property type="entry name" value="GTP1-OBG_CS"/>
</dbReference>
<dbReference type="InterPro" id="IPR006169">
    <property type="entry name" value="GTP1_OBG_dom"/>
</dbReference>
<dbReference type="InterPro" id="IPR036726">
    <property type="entry name" value="GTP1_OBG_dom_sf"/>
</dbReference>
<dbReference type="InterPro" id="IPR045086">
    <property type="entry name" value="OBG_GTPase"/>
</dbReference>
<dbReference type="InterPro" id="IPR027417">
    <property type="entry name" value="P-loop_NTPase"/>
</dbReference>
<dbReference type="NCBIfam" id="TIGR02729">
    <property type="entry name" value="Obg_CgtA"/>
    <property type="match status" value="1"/>
</dbReference>
<dbReference type="NCBIfam" id="NF008955">
    <property type="entry name" value="PRK12297.1"/>
    <property type="match status" value="1"/>
</dbReference>
<dbReference type="NCBIfam" id="NF008956">
    <property type="entry name" value="PRK12299.1"/>
    <property type="match status" value="1"/>
</dbReference>
<dbReference type="PANTHER" id="PTHR11702">
    <property type="entry name" value="DEVELOPMENTALLY REGULATED GTP-BINDING PROTEIN-RELATED"/>
    <property type="match status" value="1"/>
</dbReference>
<dbReference type="PANTHER" id="PTHR11702:SF31">
    <property type="entry name" value="MITOCHONDRIAL RIBOSOME-ASSOCIATED GTPASE 2"/>
    <property type="match status" value="1"/>
</dbReference>
<dbReference type="Pfam" id="PF01018">
    <property type="entry name" value="GTP1_OBG"/>
    <property type="match status" value="1"/>
</dbReference>
<dbReference type="Pfam" id="PF01926">
    <property type="entry name" value="MMR_HSR1"/>
    <property type="match status" value="1"/>
</dbReference>
<dbReference type="PIRSF" id="PIRSF002401">
    <property type="entry name" value="GTP_bd_Obg/CgtA"/>
    <property type="match status" value="1"/>
</dbReference>
<dbReference type="PRINTS" id="PR00326">
    <property type="entry name" value="GTP1OBG"/>
</dbReference>
<dbReference type="SUPFAM" id="SSF82051">
    <property type="entry name" value="Obg GTP-binding protein N-terminal domain"/>
    <property type="match status" value="1"/>
</dbReference>
<dbReference type="SUPFAM" id="SSF52540">
    <property type="entry name" value="P-loop containing nucleoside triphosphate hydrolases"/>
    <property type="match status" value="1"/>
</dbReference>
<dbReference type="PROSITE" id="PS51710">
    <property type="entry name" value="G_OBG"/>
    <property type="match status" value="1"/>
</dbReference>
<dbReference type="PROSITE" id="PS00905">
    <property type="entry name" value="GTP1_OBG"/>
    <property type="match status" value="1"/>
</dbReference>
<dbReference type="PROSITE" id="PS51883">
    <property type="entry name" value="OBG"/>
    <property type="match status" value="1"/>
</dbReference>
<proteinExistence type="inferred from homology"/>
<keyword id="KW-0963">Cytoplasm</keyword>
<keyword id="KW-0342">GTP-binding</keyword>
<keyword id="KW-0378">Hydrolase</keyword>
<keyword id="KW-0460">Magnesium</keyword>
<keyword id="KW-0479">Metal-binding</keyword>
<keyword id="KW-0547">Nucleotide-binding</keyword>